<reference key="1">
    <citation type="journal article" date="1998" name="Nature">
        <title>Deciphering the biology of Mycobacterium tuberculosis from the complete genome sequence.</title>
        <authorList>
            <person name="Cole S.T."/>
            <person name="Brosch R."/>
            <person name="Parkhill J."/>
            <person name="Garnier T."/>
            <person name="Churcher C.M."/>
            <person name="Harris D.E."/>
            <person name="Gordon S.V."/>
            <person name="Eiglmeier K."/>
            <person name="Gas S."/>
            <person name="Barry C.E. III"/>
            <person name="Tekaia F."/>
            <person name="Badcock K."/>
            <person name="Basham D."/>
            <person name="Brown D."/>
            <person name="Chillingworth T."/>
            <person name="Connor R."/>
            <person name="Davies R.M."/>
            <person name="Devlin K."/>
            <person name="Feltwell T."/>
            <person name="Gentles S."/>
            <person name="Hamlin N."/>
            <person name="Holroyd S."/>
            <person name="Hornsby T."/>
            <person name="Jagels K."/>
            <person name="Krogh A."/>
            <person name="McLean J."/>
            <person name="Moule S."/>
            <person name="Murphy L.D."/>
            <person name="Oliver S."/>
            <person name="Osborne J."/>
            <person name="Quail M.A."/>
            <person name="Rajandream M.A."/>
            <person name="Rogers J."/>
            <person name="Rutter S."/>
            <person name="Seeger K."/>
            <person name="Skelton S."/>
            <person name="Squares S."/>
            <person name="Squares R."/>
            <person name="Sulston J.E."/>
            <person name="Taylor K."/>
            <person name="Whitehead S."/>
            <person name="Barrell B.G."/>
        </authorList>
    </citation>
    <scope>NUCLEOTIDE SEQUENCE [LARGE SCALE GENOMIC DNA]</scope>
    <source>
        <strain>ATCC 25618 / H37Rv</strain>
    </source>
</reference>
<reference key="2">
    <citation type="journal article" date="2001" name="Proc. Natl. Acad. Sci. U.S.A.">
        <title>Regulation of the Mycobacterium tuberculosis hypoxic response gene encoding alpha -crystallin.</title>
        <authorList>
            <person name="Sherman D.R."/>
            <person name="Voskuil M."/>
            <person name="Schnappinger D."/>
            <person name="Liao R."/>
            <person name="Harrell M.I."/>
            <person name="Schoolnik G.K."/>
        </authorList>
    </citation>
    <scope>INDUCTION BY HYPOXIA</scope>
    <source>
        <strain>ATCC 25618 / H37Rv</strain>
    </source>
</reference>
<reference key="3">
    <citation type="journal article" date="2002" name="J. Bacteriol.">
        <title>Hypoxic response of Mycobacterium tuberculosis studied by metabolic labeling and proteome analysis of cellular and extracellular proteins.</title>
        <authorList>
            <person name="Rosenkrands I."/>
            <person name="Slayden R.A."/>
            <person name="Crawford J."/>
            <person name="Aagaard C."/>
            <person name="Barry C.E. III"/>
            <person name="Andersen P."/>
        </authorList>
    </citation>
    <scope>IDENTIFICATION BY MASS SPECTROMETRY</scope>
    <scope>INDUCTION BY HYPOXIA</scope>
    <source>
        <strain>ATCC 25618 / H37Rv</strain>
    </source>
</reference>
<reference key="4">
    <citation type="journal article" date="2003" name="J. Exp. Med.">
        <title>Inhibition of respiration by nitric oxide induces a Mycobacterium tuberculosis dormancy program.</title>
        <authorList>
            <person name="Voskuil M.I."/>
            <person name="Schnappinger D."/>
            <person name="Visconti K.C."/>
            <person name="Harrell M.I."/>
            <person name="Dolganov G.M."/>
            <person name="Sherman D.R."/>
            <person name="Schoolnik G.K."/>
        </authorList>
    </citation>
    <scope>INDUCTION BY NITRIC OXIDE (NO) AND BY HYPOXIA</scope>
    <scope>DORMANCY REGULON</scope>
    <source>
        <strain>ATCC 25618 / H37Rv</strain>
    </source>
</reference>
<reference key="5">
    <citation type="journal article" date="2008" name="Cell Host Microbe">
        <title>Mycobacterium tuberculosis senses host-derived carbon monoxide during macrophage infection.</title>
        <authorList>
            <person name="Shiloh M.U."/>
            <person name="Manzanillo P."/>
            <person name="Cox J.S."/>
        </authorList>
    </citation>
    <scope>INDUCTION BY CARBON MONOXIDE (CO)</scope>
    <source>
        <strain>ATCC 35801 / TMC 107 / Erdman</strain>
    </source>
</reference>
<reference key="6">
    <citation type="journal article" date="2008" name="J. Biol. Chem.">
        <title>Heme oxygenase-1-derived carbon monoxide induces the Mycobacterium tuberculosis dormancy regulon.</title>
        <authorList>
            <person name="Kumar A."/>
            <person name="Deshane J.S."/>
            <person name="Crossman D.K."/>
            <person name="Bolisetty S."/>
            <person name="Yan B.S."/>
            <person name="Kramnik I."/>
            <person name="Agarwal A."/>
            <person name="Steyn A.J."/>
        </authorList>
    </citation>
    <scope>INDUCTION BY CARBON MONOXIDE (CO)</scope>
    <scope>DORMANCY REGULON</scope>
    <source>
        <strain>ATCC 25618 / H37Rv</strain>
    </source>
</reference>
<reference key="7">
    <citation type="journal article" date="2011" name="Mol. Cell. Proteomics">
        <title>Proteogenomic analysis of Mycobacterium tuberculosis by high resolution mass spectrometry.</title>
        <authorList>
            <person name="Kelkar D.S."/>
            <person name="Kumar D."/>
            <person name="Kumar P."/>
            <person name="Balakrishnan L."/>
            <person name="Muthusamy B."/>
            <person name="Yadav A.K."/>
            <person name="Shrivastava P."/>
            <person name="Marimuthu A."/>
            <person name="Anand S."/>
            <person name="Sundaram H."/>
            <person name="Kingsbury R."/>
            <person name="Harsha H.C."/>
            <person name="Nair B."/>
            <person name="Prasad T.S."/>
            <person name="Chauhan D.S."/>
            <person name="Katoch K."/>
            <person name="Katoch V.M."/>
            <person name="Kumar P."/>
            <person name="Chaerkady R."/>
            <person name="Ramachandran S."/>
            <person name="Dash D."/>
            <person name="Pandey A."/>
        </authorList>
    </citation>
    <scope>IDENTIFICATION BY MASS SPECTROMETRY [LARGE SCALE ANALYSIS]</scope>
    <source>
        <strain>ATCC 25618 / H37Rv</strain>
    </source>
</reference>
<organism>
    <name type="scientific">Mycobacterium tuberculosis (strain ATCC 25618 / H37Rv)</name>
    <dbReference type="NCBI Taxonomy" id="83332"/>
    <lineage>
        <taxon>Bacteria</taxon>
        <taxon>Bacillati</taxon>
        <taxon>Actinomycetota</taxon>
        <taxon>Actinomycetes</taxon>
        <taxon>Mycobacteriales</taxon>
        <taxon>Mycobacteriaceae</taxon>
        <taxon>Mycobacterium</taxon>
        <taxon>Mycobacterium tuberculosis complex</taxon>
    </lineage>
</organism>
<proteinExistence type="evidence at protein level"/>
<evidence type="ECO:0000269" key="1">
    <source>
    </source>
</evidence>
<evidence type="ECO:0000269" key="2">
    <source>
    </source>
</evidence>
<evidence type="ECO:0000269" key="3">
    <source>
    </source>
</evidence>
<evidence type="ECO:0000269" key="4">
    <source>
    </source>
</evidence>
<evidence type="ECO:0000269" key="5">
    <source>
    </source>
</evidence>
<comment type="induction">
    <text evidence="1 2 3 4 5">A member of the dormancy regulon. Induced in response to reduced oxygen tension (hypoxia), low levels of nitric oxide (NO) and carbon monoxide (CO). It is hoped that this regulon will give insight into the latent, or dormant phase of infection.</text>
</comment>
<accession>P9WM83</accession>
<accession>L0T726</accession>
<accession>O53766</accession>
<accession>Q7D9M3</accession>
<keyword id="KW-1185">Reference proteome</keyword>
<name>Y0569_MYCTU</name>
<sequence>MKAKVGDWLVIKGATIDQPDHRGLIIEVRSSDGSPPYVVRWLETDHVATVIPGPDAVVVTAEEQNAADERAQHRFGAVQSAILHARGT</sequence>
<feature type="chain" id="PRO_0000392682" description="Uncharacterized protein Rv0569">
    <location>
        <begin position="1"/>
        <end position="88"/>
    </location>
</feature>
<gene>
    <name type="ordered locus">Rv0569</name>
</gene>
<dbReference type="EMBL" id="AL123456">
    <property type="protein sequence ID" value="CCP43307.1"/>
    <property type="molecule type" value="Genomic_DNA"/>
</dbReference>
<dbReference type="RefSeq" id="NP_215083.1">
    <property type="nucleotide sequence ID" value="NC_000962.3"/>
</dbReference>
<dbReference type="RefSeq" id="WP_003402995.1">
    <property type="nucleotide sequence ID" value="NZ_NVQJ01000036.1"/>
</dbReference>
<dbReference type="SMR" id="P9WM83"/>
<dbReference type="STRING" id="83332.Rv0569"/>
<dbReference type="PaxDb" id="83332-Rv0569"/>
<dbReference type="DNASU" id="887678"/>
<dbReference type="GeneID" id="887678"/>
<dbReference type="KEGG" id="mtu:Rv0569"/>
<dbReference type="KEGG" id="mtv:RVBD_0569"/>
<dbReference type="TubercuList" id="Rv0569"/>
<dbReference type="eggNOG" id="COG2905">
    <property type="taxonomic scope" value="Bacteria"/>
</dbReference>
<dbReference type="InParanoid" id="P9WM83"/>
<dbReference type="OrthoDB" id="4828144at2"/>
<dbReference type="PhylomeDB" id="P9WM83"/>
<dbReference type="Proteomes" id="UP000001584">
    <property type="component" value="Chromosome"/>
</dbReference>
<dbReference type="GO" id="GO:0005829">
    <property type="term" value="C:cytosol"/>
    <property type="evidence" value="ECO:0007005"/>
    <property type="project" value="MTBBASE"/>
</dbReference>
<dbReference type="GO" id="GO:0009274">
    <property type="term" value="C:peptidoglycan-based cell wall"/>
    <property type="evidence" value="ECO:0007005"/>
    <property type="project" value="MTBBASE"/>
</dbReference>
<dbReference type="GO" id="GO:0001666">
    <property type="term" value="P:response to hypoxia"/>
    <property type="evidence" value="ECO:0000314"/>
    <property type="project" value="MTBBASE"/>
</dbReference>
<dbReference type="FunFam" id="2.30.30.440:FF:000001">
    <property type="entry name" value="DUF1918 domain-containing protein"/>
    <property type="match status" value="1"/>
</dbReference>
<dbReference type="Gene3D" id="2.30.30.440">
    <property type="entry name" value="Domain of unknown function DUF1918"/>
    <property type="match status" value="1"/>
</dbReference>
<dbReference type="InterPro" id="IPR015035">
    <property type="entry name" value="DUF1918"/>
</dbReference>
<dbReference type="Pfam" id="PF08940">
    <property type="entry name" value="DUF1918"/>
    <property type="match status" value="1"/>
</dbReference>
<dbReference type="SUPFAM" id="SSF50118">
    <property type="entry name" value="Cell growth inhibitor/plasmid maintenance toxic component"/>
    <property type="match status" value="1"/>
</dbReference>
<protein>
    <recommendedName>
        <fullName>Uncharacterized protein Rv0569</fullName>
    </recommendedName>
</protein>